<sequence>MFSFIMKAAILLILVGCISFCISSEPLNESEITFEREERSLADPAGRQKRQSGLSCPKRISHSPEYPRDCYDILQSCSGQSPPSGQYYIQPDGGNLIKVYCDMETDEGGWTVFQRRIDGTINFYRSWSYYQTGFGNLNTEFWLGNDNIHYLTSQGDYELRVELNNTLGNHYYAKYNKFRIGDSFSEYLLVLGAYSGTAGDSLAYHNTMRFSTYDNDNDVYSINCASHSSYGRGAWWYKSCLLSNLNGQYYDYSGAPSIYWSYLPGDNDQIPFAEMKLRNRSI</sequence>
<name>FIBA_APOPA</name>
<proteinExistence type="evidence at transcript level"/>
<organism>
    <name type="scientific">Apostichopus parvimensis</name>
    <name type="common">Warty sea cucumber</name>
    <name type="synonym">Stichopus parvimensis</name>
    <dbReference type="NCBI Taxonomy" id="1902835"/>
    <lineage>
        <taxon>Eukaryota</taxon>
        <taxon>Metazoa</taxon>
        <taxon>Echinodermata</taxon>
        <taxon>Eleutherozoa</taxon>
        <taxon>Echinozoa</taxon>
        <taxon>Holothuroidea</taxon>
        <taxon>Aspidochirotacea</taxon>
        <taxon>Aspidochirotida</taxon>
        <taxon>Stichopodidae</taxon>
        <taxon>Apostichopus</taxon>
    </lineage>
</organism>
<keyword id="KW-1015">Disulfide bond</keyword>
<keyword id="KW-0732">Signal</keyword>
<accession>P19477</accession>
<reference key="1">
    <citation type="journal article" date="1990" name="Proc. Natl. Acad. Sci. U.S.A.">
        <title>Presence of a vertebrate fibrinogen-like sequence in an echinoderm.</title>
        <authorList>
            <person name="Xu X."/>
            <person name="Doolittle R.F."/>
        </authorList>
    </citation>
    <scope>NUCLEOTIDE SEQUENCE [MRNA]</scope>
    <source>
        <tissue>Soft tissues</tissue>
    </source>
</reference>
<dbReference type="EMBL" id="M31326">
    <property type="protein sequence ID" value="AAA29962.1"/>
    <property type="molecule type" value="mRNA"/>
</dbReference>
<dbReference type="PIR" id="A35084">
    <property type="entry name" value="A35084"/>
</dbReference>
<dbReference type="SMR" id="P19477"/>
<dbReference type="GO" id="GO:0005615">
    <property type="term" value="C:extracellular space"/>
    <property type="evidence" value="ECO:0007669"/>
    <property type="project" value="TreeGrafter"/>
</dbReference>
<dbReference type="CDD" id="cd00087">
    <property type="entry name" value="FReD"/>
    <property type="match status" value="1"/>
</dbReference>
<dbReference type="FunFam" id="3.90.215.10:FF:000001">
    <property type="entry name" value="Tenascin isoform 1"/>
    <property type="match status" value="1"/>
</dbReference>
<dbReference type="Gene3D" id="3.90.215.10">
    <property type="entry name" value="Gamma Fibrinogen, chain A, domain 1"/>
    <property type="match status" value="1"/>
</dbReference>
<dbReference type="InterPro" id="IPR036056">
    <property type="entry name" value="Fibrinogen-like_C"/>
</dbReference>
<dbReference type="InterPro" id="IPR014716">
    <property type="entry name" value="Fibrinogen_a/b/g_C_1"/>
</dbReference>
<dbReference type="InterPro" id="IPR002181">
    <property type="entry name" value="Fibrinogen_a/b/g_C_dom"/>
</dbReference>
<dbReference type="InterPro" id="IPR050373">
    <property type="entry name" value="Fibrinogen_C-term_domain"/>
</dbReference>
<dbReference type="InterPro" id="IPR020837">
    <property type="entry name" value="Fibrinogen_CS"/>
</dbReference>
<dbReference type="NCBIfam" id="NF040941">
    <property type="entry name" value="GGGWT_bact"/>
    <property type="match status" value="1"/>
</dbReference>
<dbReference type="PANTHER" id="PTHR19143:SF327">
    <property type="entry name" value="FI21813P1-RELATED"/>
    <property type="match status" value="1"/>
</dbReference>
<dbReference type="PANTHER" id="PTHR19143">
    <property type="entry name" value="FIBRINOGEN/TENASCIN/ANGIOPOEITIN"/>
    <property type="match status" value="1"/>
</dbReference>
<dbReference type="Pfam" id="PF00147">
    <property type="entry name" value="Fibrinogen_C"/>
    <property type="match status" value="1"/>
</dbReference>
<dbReference type="SMART" id="SM00186">
    <property type="entry name" value="FBG"/>
    <property type="match status" value="1"/>
</dbReference>
<dbReference type="SUPFAM" id="SSF56496">
    <property type="entry name" value="Fibrinogen C-terminal domain-like"/>
    <property type="match status" value="1"/>
</dbReference>
<dbReference type="PROSITE" id="PS00514">
    <property type="entry name" value="FIBRINOGEN_C_1"/>
    <property type="match status" value="1"/>
</dbReference>
<dbReference type="PROSITE" id="PS51406">
    <property type="entry name" value="FIBRINOGEN_C_2"/>
    <property type="match status" value="1"/>
</dbReference>
<evidence type="ECO:0000250" key="1">
    <source>
        <dbReference type="UniProtKB" id="P14448"/>
    </source>
</evidence>
<evidence type="ECO:0000255" key="2">
    <source>
        <dbReference type="PROSITE-ProRule" id="PRU00739"/>
    </source>
</evidence>
<protein>
    <recommendedName>
        <fullName>Fibrinogen-like protein A</fullName>
        <shortName>FREP-A</shortName>
    </recommendedName>
</protein>
<feature type="signal peptide">
    <location>
        <begin position="1"/>
        <end position="24"/>
    </location>
</feature>
<feature type="chain" id="PRO_0000009104" description="Fibrinogen-like protein A">
    <location>
        <begin position="25"/>
        <end position="282"/>
    </location>
</feature>
<feature type="domain" description="Fibrinogen C-terminal" evidence="2">
    <location>
        <begin position="61"/>
        <end position="281"/>
    </location>
</feature>
<feature type="disulfide bond" description="Interchain (with gamma chain)" evidence="1">
    <location>
        <position position="17"/>
    </location>
</feature>
<feature type="disulfide bond" description="Interchain (with beta chain)" evidence="1">
    <location>
        <position position="21"/>
    </location>
</feature>
<feature type="disulfide bond" description="Interchain (with beta chain)" evidence="1">
    <location>
        <position position="56"/>
    </location>
</feature>
<feature type="disulfide bond" evidence="2">
    <location>
        <begin position="70"/>
        <end position="101"/>
    </location>
</feature>
<feature type="disulfide bond" evidence="2">
    <location>
        <begin position="224"/>
        <end position="240"/>
    </location>
</feature>